<evidence type="ECO:0000250" key="1"/>
<evidence type="ECO:0000305" key="2"/>
<evidence type="ECO:0007829" key="3">
    <source>
        <dbReference type="PDB" id="2JC3"/>
    </source>
</evidence>
<dbReference type="EC" id="2.5.1.47"/>
<dbReference type="EMBL" id="X59595">
    <property type="protein sequence ID" value="CAA42164.1"/>
    <property type="molecule type" value="Genomic_DNA"/>
</dbReference>
<dbReference type="EMBL" id="AE006468">
    <property type="protein sequence ID" value="AAL21334.1"/>
    <property type="molecule type" value="Genomic_DNA"/>
</dbReference>
<dbReference type="PIR" id="S29567">
    <property type="entry name" value="S29567"/>
</dbReference>
<dbReference type="RefSeq" id="NP_461375.1">
    <property type="nucleotide sequence ID" value="NC_003197.2"/>
</dbReference>
<dbReference type="RefSeq" id="WP_001093886.1">
    <property type="nucleotide sequence ID" value="NC_003197.2"/>
</dbReference>
<dbReference type="PDB" id="2JC3">
    <property type="method" value="X-ray"/>
    <property type="resolution" value="2.30 A"/>
    <property type="chains" value="A/B/C/D/E/F/G/H=1-303"/>
</dbReference>
<dbReference type="PDBsum" id="2JC3"/>
<dbReference type="SMR" id="P29848"/>
<dbReference type="STRING" id="99287.STM2440"/>
<dbReference type="PaxDb" id="99287-STM2440"/>
<dbReference type="GeneID" id="1253962"/>
<dbReference type="KEGG" id="stm:STM2440"/>
<dbReference type="PATRIC" id="fig|99287.12.peg.2578"/>
<dbReference type="HOGENOM" id="CLU_021018_1_0_6"/>
<dbReference type="OMA" id="WMADYGF"/>
<dbReference type="PhylomeDB" id="P29848"/>
<dbReference type="BioCyc" id="SENT99287:STM2440-MONOMER"/>
<dbReference type="BRENDA" id="2.5.1.144">
    <property type="organism ID" value="5542"/>
</dbReference>
<dbReference type="BRENDA" id="2.5.1.47">
    <property type="organism ID" value="5542"/>
</dbReference>
<dbReference type="SABIO-RK" id="P29848"/>
<dbReference type="UniPathway" id="UPA00136">
    <property type="reaction ID" value="UER00200"/>
</dbReference>
<dbReference type="EvolutionaryTrace" id="P29848"/>
<dbReference type="Proteomes" id="UP000001014">
    <property type="component" value="Chromosome"/>
</dbReference>
<dbReference type="GO" id="GO:0005737">
    <property type="term" value="C:cytoplasm"/>
    <property type="evidence" value="ECO:0000318"/>
    <property type="project" value="GO_Central"/>
</dbReference>
<dbReference type="GO" id="GO:0004124">
    <property type="term" value="F:cysteine synthase activity"/>
    <property type="evidence" value="ECO:0000318"/>
    <property type="project" value="GO_Central"/>
</dbReference>
<dbReference type="GO" id="GO:0019344">
    <property type="term" value="P:cysteine biosynthetic process"/>
    <property type="evidence" value="ECO:0000318"/>
    <property type="project" value="GO_Central"/>
</dbReference>
<dbReference type="GO" id="GO:0006535">
    <property type="term" value="P:cysteine biosynthetic process from serine"/>
    <property type="evidence" value="ECO:0007669"/>
    <property type="project" value="InterPro"/>
</dbReference>
<dbReference type="CDD" id="cd01561">
    <property type="entry name" value="CBS_like"/>
    <property type="match status" value="1"/>
</dbReference>
<dbReference type="FunFam" id="3.40.50.1100:FF:000003">
    <property type="entry name" value="Cystathionine beta-synthase"/>
    <property type="match status" value="1"/>
</dbReference>
<dbReference type="FunFam" id="3.40.50.1100:FF:000029">
    <property type="entry name" value="Cysteine synthase"/>
    <property type="match status" value="1"/>
</dbReference>
<dbReference type="Gene3D" id="3.40.50.1100">
    <property type="match status" value="2"/>
</dbReference>
<dbReference type="InterPro" id="IPR005856">
    <property type="entry name" value="Cys_synth"/>
</dbReference>
<dbReference type="InterPro" id="IPR050214">
    <property type="entry name" value="Cys_Synth/Cystath_Beta-Synth"/>
</dbReference>
<dbReference type="InterPro" id="IPR005858">
    <property type="entry name" value="CysM"/>
</dbReference>
<dbReference type="InterPro" id="IPR001216">
    <property type="entry name" value="P-phosphate_BS"/>
</dbReference>
<dbReference type="InterPro" id="IPR001926">
    <property type="entry name" value="TrpB-like_PALP"/>
</dbReference>
<dbReference type="InterPro" id="IPR036052">
    <property type="entry name" value="TrpB-like_PALP_sf"/>
</dbReference>
<dbReference type="NCBIfam" id="TIGR01136">
    <property type="entry name" value="cysKM"/>
    <property type="match status" value="1"/>
</dbReference>
<dbReference type="NCBIfam" id="TIGR01138">
    <property type="entry name" value="cysM"/>
    <property type="match status" value="1"/>
</dbReference>
<dbReference type="NCBIfam" id="NF008735">
    <property type="entry name" value="PRK11761.1"/>
    <property type="match status" value="1"/>
</dbReference>
<dbReference type="PANTHER" id="PTHR10314">
    <property type="entry name" value="CYSTATHIONINE BETA-SYNTHASE"/>
    <property type="match status" value="1"/>
</dbReference>
<dbReference type="Pfam" id="PF00291">
    <property type="entry name" value="PALP"/>
    <property type="match status" value="1"/>
</dbReference>
<dbReference type="SUPFAM" id="SSF53686">
    <property type="entry name" value="Tryptophan synthase beta subunit-like PLP-dependent enzymes"/>
    <property type="match status" value="1"/>
</dbReference>
<dbReference type="PROSITE" id="PS00901">
    <property type="entry name" value="CYS_SYNTHASE"/>
    <property type="match status" value="1"/>
</dbReference>
<accession>P29848</accession>
<gene>
    <name type="primary">cysM</name>
    <name type="ordered locus">STM2440</name>
</gene>
<proteinExistence type="evidence at protein level"/>
<comment type="function">
    <text>Two cysteine synthase enzymes are found. Both catalyze the same reaction. Cysteine synthase B can also use thiosulfate in place of sulfide to give cysteine thiosulfonate as a product.</text>
</comment>
<comment type="catalytic activity">
    <reaction>
        <text>O-acetyl-L-serine + hydrogen sulfide = L-cysteine + acetate</text>
        <dbReference type="Rhea" id="RHEA:14829"/>
        <dbReference type="ChEBI" id="CHEBI:29919"/>
        <dbReference type="ChEBI" id="CHEBI:30089"/>
        <dbReference type="ChEBI" id="CHEBI:35235"/>
        <dbReference type="ChEBI" id="CHEBI:58340"/>
        <dbReference type="EC" id="2.5.1.47"/>
    </reaction>
</comment>
<comment type="cofactor">
    <cofactor>
        <name>pyridoxal 5'-phosphate</name>
        <dbReference type="ChEBI" id="CHEBI:597326"/>
    </cofactor>
</comment>
<comment type="pathway">
    <text>Amino-acid biosynthesis; L-cysteine biosynthesis; L-cysteine from L-serine: step 2/2.</text>
</comment>
<comment type="similarity">
    <text evidence="2">Belongs to the cysteine synthase/cystathionine beta-synthase family.</text>
</comment>
<organism>
    <name type="scientific">Salmonella typhimurium (strain LT2 / SGSC1412 / ATCC 700720)</name>
    <dbReference type="NCBI Taxonomy" id="99287"/>
    <lineage>
        <taxon>Bacteria</taxon>
        <taxon>Pseudomonadati</taxon>
        <taxon>Pseudomonadota</taxon>
        <taxon>Gammaproteobacteria</taxon>
        <taxon>Enterobacterales</taxon>
        <taxon>Enterobacteriaceae</taxon>
        <taxon>Salmonella</taxon>
    </lineage>
</organism>
<reference key="1">
    <citation type="submission" date="1991-05" db="EMBL/GenBank/DDBJ databases">
        <authorList>
            <person name="Sivaprasad A.V."/>
            <person name="Kuczek E.S."/>
            <person name="Bawden C.S."/>
            <person name="Rogers G.E."/>
        </authorList>
    </citation>
    <scope>NUCLEOTIDE SEQUENCE [GENOMIC DNA]</scope>
    <source>
        <strain>LT2</strain>
    </source>
</reference>
<reference key="2">
    <citation type="journal article" date="2001" name="Nature">
        <title>Complete genome sequence of Salmonella enterica serovar Typhimurium LT2.</title>
        <authorList>
            <person name="McClelland M."/>
            <person name="Sanderson K.E."/>
            <person name="Spieth J."/>
            <person name="Clifton S.W."/>
            <person name="Latreille P."/>
            <person name="Courtney L."/>
            <person name="Porwollik S."/>
            <person name="Ali J."/>
            <person name="Dante M."/>
            <person name="Du F."/>
            <person name="Hou S."/>
            <person name="Layman D."/>
            <person name="Leonard S."/>
            <person name="Nguyen C."/>
            <person name="Scott K."/>
            <person name="Holmes A."/>
            <person name="Grewal N."/>
            <person name="Mulvaney E."/>
            <person name="Ryan E."/>
            <person name="Sun H."/>
            <person name="Florea L."/>
            <person name="Miller W."/>
            <person name="Stoneking T."/>
            <person name="Nhan M."/>
            <person name="Waterston R."/>
            <person name="Wilson R.K."/>
        </authorList>
    </citation>
    <scope>NUCLEOTIDE SEQUENCE [LARGE SCALE GENOMIC DNA]</scope>
    <source>
        <strain>LT2 / SGSC1412 / ATCC 700720</strain>
    </source>
</reference>
<protein>
    <recommendedName>
        <fullName>Cysteine synthase B</fullName>
        <shortName>CSase B</shortName>
        <ecNumber>2.5.1.47</ecNumber>
    </recommendedName>
    <alternativeName>
        <fullName>O-acetylserine (thiol)-lyase B</fullName>
        <shortName>OAS-TL B</shortName>
    </alternativeName>
    <alternativeName>
        <fullName>O-acetylserine sulfhydrylase B</fullName>
    </alternativeName>
</protein>
<sequence length="303" mass="32645">MNTLEQTIGNTPLVKLQRLGPDNGSEIWVKLEGNNPAGSVKDRAALSMIVEAEKRGEIKPGDVLIEATSGNTGIALAMIAALKGYRMKLLMPDNMSQERRAAMRAYGAELILVTKEQGMEGARDLALAMSERGEGKLLDQFNNPDNPYAHYTTTGPEIWRQTSGRITHFVSSMGTTGTITGVSRFLREQEKPVTIVGLQPEEGSSIPGIRRWPAEYMPGIFNASLVDEVLDIHQNDAENTMRELAVREGIFCGVSSGGAVAGALRVARATPGAIVVAIICDRGDRYLSTGVFGEEHFSQGAGI</sequence>
<feature type="chain" id="PRO_0000167109" description="Cysteine synthase B">
    <location>
        <begin position="1"/>
        <end position="303"/>
    </location>
</feature>
<feature type="binding site" evidence="1">
    <location>
        <position position="71"/>
    </location>
    <ligand>
        <name>pyridoxal 5'-phosphate</name>
        <dbReference type="ChEBI" id="CHEBI:597326"/>
    </ligand>
</feature>
<feature type="binding site" evidence="1">
    <location>
        <begin position="174"/>
        <end position="178"/>
    </location>
    <ligand>
        <name>pyridoxal 5'-phosphate</name>
        <dbReference type="ChEBI" id="CHEBI:597326"/>
    </ligand>
</feature>
<feature type="binding site" evidence="1">
    <location>
        <position position="255"/>
    </location>
    <ligand>
        <name>pyridoxal 5'-phosphate</name>
        <dbReference type="ChEBI" id="CHEBI:597326"/>
    </ligand>
</feature>
<feature type="modified residue" description="N6-(pyridoxal phosphate)lysine" evidence="1">
    <location>
        <position position="41"/>
    </location>
</feature>
<feature type="helix" evidence="3">
    <location>
        <begin position="4"/>
        <end position="7"/>
    </location>
</feature>
<feature type="strand" evidence="3">
    <location>
        <begin position="13"/>
        <end position="15"/>
    </location>
</feature>
<feature type="strand" evidence="3">
    <location>
        <begin position="17"/>
        <end position="20"/>
    </location>
</feature>
<feature type="strand" evidence="3">
    <location>
        <begin position="22"/>
        <end position="24"/>
    </location>
</feature>
<feature type="strand" evidence="3">
    <location>
        <begin position="26"/>
        <end position="31"/>
    </location>
</feature>
<feature type="helix" evidence="3">
    <location>
        <begin position="32"/>
        <end position="34"/>
    </location>
</feature>
<feature type="helix" evidence="3">
    <location>
        <begin position="41"/>
        <end position="54"/>
    </location>
</feature>
<feature type="strand" evidence="3">
    <location>
        <begin position="63"/>
        <end position="67"/>
    </location>
</feature>
<feature type="helix" evidence="3">
    <location>
        <begin position="71"/>
        <end position="83"/>
    </location>
</feature>
<feature type="strand" evidence="3">
    <location>
        <begin position="86"/>
        <end position="93"/>
    </location>
</feature>
<feature type="helix" evidence="3">
    <location>
        <begin position="97"/>
        <end position="104"/>
    </location>
</feature>
<feature type="turn" evidence="3">
    <location>
        <begin position="105"/>
        <end position="107"/>
    </location>
</feature>
<feature type="strand" evidence="3">
    <location>
        <begin position="109"/>
        <end position="113"/>
    </location>
</feature>
<feature type="turn" evidence="3">
    <location>
        <begin position="115"/>
        <end position="117"/>
    </location>
</feature>
<feature type="helix" evidence="3">
    <location>
        <begin position="118"/>
        <end position="132"/>
    </location>
</feature>
<feature type="strand" evidence="3">
    <location>
        <begin position="134"/>
        <end position="137"/>
    </location>
</feature>
<feature type="turn" evidence="3">
    <location>
        <begin position="140"/>
        <end position="142"/>
    </location>
</feature>
<feature type="helix" evidence="3">
    <location>
        <begin position="145"/>
        <end position="152"/>
    </location>
</feature>
<feature type="helix" evidence="3">
    <location>
        <begin position="154"/>
        <end position="161"/>
    </location>
</feature>
<feature type="turn" evidence="3">
    <location>
        <begin position="162"/>
        <end position="164"/>
    </location>
</feature>
<feature type="strand" evidence="3">
    <location>
        <begin position="168"/>
        <end position="172"/>
    </location>
</feature>
<feature type="strand" evidence="3">
    <location>
        <begin position="174"/>
        <end position="176"/>
    </location>
</feature>
<feature type="helix" evidence="3">
    <location>
        <begin position="177"/>
        <end position="187"/>
    </location>
</feature>
<feature type="strand" evidence="3">
    <location>
        <begin position="189"/>
        <end position="191"/>
    </location>
</feature>
<feature type="strand" evidence="3">
    <location>
        <begin position="194"/>
        <end position="200"/>
    </location>
</feature>
<feature type="helix" evidence="3">
    <location>
        <begin position="223"/>
        <end position="225"/>
    </location>
</feature>
<feature type="strand" evidence="3">
    <location>
        <begin position="227"/>
        <end position="232"/>
    </location>
</feature>
<feature type="helix" evidence="3">
    <location>
        <begin position="234"/>
        <end position="248"/>
    </location>
</feature>
<feature type="helix" evidence="3">
    <location>
        <begin position="254"/>
        <end position="269"/>
    </location>
</feature>
<feature type="strand" evidence="3">
    <location>
        <begin position="274"/>
        <end position="279"/>
    </location>
</feature>
<feature type="strand" evidence="3">
    <location>
        <begin position="281"/>
        <end position="283"/>
    </location>
</feature>
<feature type="helix" evidence="3">
    <location>
        <begin position="284"/>
        <end position="289"/>
    </location>
</feature>
<name>CYSM_SALTY</name>
<keyword id="KW-0002">3D-structure</keyword>
<keyword id="KW-0028">Amino-acid biosynthesis</keyword>
<keyword id="KW-0198">Cysteine biosynthesis</keyword>
<keyword id="KW-0663">Pyridoxal phosphate</keyword>
<keyword id="KW-1185">Reference proteome</keyword>
<keyword id="KW-0808">Transferase</keyword>